<gene>
    <name evidence="1" type="primary">atpB</name>
    <name type="ordered locus">NT01CX_1648</name>
</gene>
<organism>
    <name type="scientific">Clostridium novyi (strain NT)</name>
    <dbReference type="NCBI Taxonomy" id="386415"/>
    <lineage>
        <taxon>Bacteria</taxon>
        <taxon>Bacillati</taxon>
        <taxon>Bacillota</taxon>
        <taxon>Clostridia</taxon>
        <taxon>Eubacteriales</taxon>
        <taxon>Clostridiaceae</taxon>
        <taxon>Clostridium</taxon>
    </lineage>
</organism>
<proteinExistence type="inferred from homology"/>
<comment type="function">
    <text evidence="1">Produces ATP from ADP in the presence of a proton gradient across the membrane. The V-type beta chain is a regulatory subunit.</text>
</comment>
<comment type="similarity">
    <text evidence="1">Belongs to the ATPase alpha/beta chains family.</text>
</comment>
<reference key="1">
    <citation type="journal article" date="2006" name="Nat. Biotechnol.">
        <title>The genome and transcriptomes of the anti-tumor agent Clostridium novyi-NT.</title>
        <authorList>
            <person name="Bettegowda C."/>
            <person name="Huang X."/>
            <person name="Lin J."/>
            <person name="Cheong I."/>
            <person name="Kohli M."/>
            <person name="Szabo S.A."/>
            <person name="Zhang X."/>
            <person name="Diaz L.A. Jr."/>
            <person name="Velculescu V.E."/>
            <person name="Parmigiani G."/>
            <person name="Kinzler K.W."/>
            <person name="Vogelstein B."/>
            <person name="Zhou S."/>
        </authorList>
    </citation>
    <scope>NUCLEOTIDE SEQUENCE [LARGE SCALE GENOMIC DNA]</scope>
    <source>
        <strain>NT</strain>
    </source>
</reference>
<name>VATB_CLONN</name>
<evidence type="ECO:0000255" key="1">
    <source>
        <dbReference type="HAMAP-Rule" id="MF_00310"/>
    </source>
</evidence>
<feature type="chain" id="PRO_0000322490" description="V-type ATP synthase beta chain">
    <location>
        <begin position="1"/>
        <end position="460"/>
    </location>
</feature>
<protein>
    <recommendedName>
        <fullName evidence="1">V-type ATP synthase beta chain</fullName>
    </recommendedName>
    <alternativeName>
        <fullName evidence="1">V-ATPase subunit B</fullName>
    </alternativeName>
</protein>
<accession>A0PZC7</accession>
<keyword id="KW-0066">ATP synthesis</keyword>
<keyword id="KW-0375">Hydrogen ion transport</keyword>
<keyword id="KW-0406">Ion transport</keyword>
<keyword id="KW-1185">Reference proteome</keyword>
<keyword id="KW-0813">Transport</keyword>
<sequence length="460" mass="51176">MLKEYKTVQEVVGPLMLVEGTKGVTYDELVEIELQTGEIRHGRVLEISEDKALIQLFEGSTGINLKETKTRFLGKPLEVGLSEDMLGRVFDGMGRPKDGGPKIIPEERRDINGEPLNPFARDYPSEFIQTGVSAIDGLNTLVRGQKLPVFSGSGLPHAELAAQIARQAKVLGSDSKFAVVFAAMGITFEEAQFFIQDFTKTGSIDRTVLFMNLANDPAVERIATPRIALTTAEFLAYEKGMHVLVIMTDMTNYAEALREVSAARKEVPGRRGYPGYLYTDLSTLYERAGRVKGKPGSITQIPILTMPEDDKTHPIPDLTGYITEGQIILSRELYKKGIMPPIDVLPSLSRLKDKGIGKDKTREDHADTMNQLFAGYAQGKQAKELAVILGESALSDIDKAYAKFADAFEKEYVSQGFNTNRSIEETLNLGWKLLKILPRTELKRIRDEYLEKYLDTKEGE</sequence>
<dbReference type="EMBL" id="CP000382">
    <property type="protein sequence ID" value="ABK61614.1"/>
    <property type="molecule type" value="Genomic_DNA"/>
</dbReference>
<dbReference type="RefSeq" id="WP_011721736.1">
    <property type="nucleotide sequence ID" value="NC_008593.1"/>
</dbReference>
<dbReference type="SMR" id="A0PZC7"/>
<dbReference type="STRING" id="386415.NT01CX_1648"/>
<dbReference type="KEGG" id="cno:NT01CX_1648"/>
<dbReference type="eggNOG" id="COG1156">
    <property type="taxonomic scope" value="Bacteria"/>
</dbReference>
<dbReference type="HOGENOM" id="CLU_022916_0_0_9"/>
<dbReference type="Proteomes" id="UP000008220">
    <property type="component" value="Chromosome"/>
</dbReference>
<dbReference type="GO" id="GO:0005524">
    <property type="term" value="F:ATP binding"/>
    <property type="evidence" value="ECO:0007669"/>
    <property type="project" value="UniProtKB-UniRule"/>
</dbReference>
<dbReference type="GO" id="GO:0046933">
    <property type="term" value="F:proton-transporting ATP synthase activity, rotational mechanism"/>
    <property type="evidence" value="ECO:0007669"/>
    <property type="project" value="UniProtKB-UniRule"/>
</dbReference>
<dbReference type="GO" id="GO:0042777">
    <property type="term" value="P:proton motive force-driven plasma membrane ATP synthesis"/>
    <property type="evidence" value="ECO:0007669"/>
    <property type="project" value="UniProtKB-UniRule"/>
</dbReference>
<dbReference type="CDD" id="cd18112">
    <property type="entry name" value="ATP-synt_V_A-type_beta_C"/>
    <property type="match status" value="1"/>
</dbReference>
<dbReference type="CDD" id="cd18118">
    <property type="entry name" value="ATP-synt_V_A-type_beta_N"/>
    <property type="match status" value="1"/>
</dbReference>
<dbReference type="CDD" id="cd01135">
    <property type="entry name" value="V_A-ATPase_B"/>
    <property type="match status" value="1"/>
</dbReference>
<dbReference type="Gene3D" id="3.40.50.12240">
    <property type="match status" value="1"/>
</dbReference>
<dbReference type="HAMAP" id="MF_00310">
    <property type="entry name" value="ATP_synth_B_arch"/>
    <property type="match status" value="1"/>
</dbReference>
<dbReference type="InterPro" id="IPR055190">
    <property type="entry name" value="ATP-synt_VA_C"/>
</dbReference>
<dbReference type="InterPro" id="IPR020003">
    <property type="entry name" value="ATPase_a/bsu_AS"/>
</dbReference>
<dbReference type="InterPro" id="IPR004100">
    <property type="entry name" value="ATPase_F1/V1/A1_a/bsu_N"/>
</dbReference>
<dbReference type="InterPro" id="IPR000194">
    <property type="entry name" value="ATPase_F1/V1/A1_a/bsu_nucl-bd"/>
</dbReference>
<dbReference type="InterPro" id="IPR027417">
    <property type="entry name" value="P-loop_NTPase"/>
</dbReference>
<dbReference type="InterPro" id="IPR022879">
    <property type="entry name" value="V-ATPase_su_B/beta"/>
</dbReference>
<dbReference type="NCBIfam" id="NF003235">
    <property type="entry name" value="PRK04196.1"/>
    <property type="match status" value="1"/>
</dbReference>
<dbReference type="PANTHER" id="PTHR43389">
    <property type="entry name" value="V-TYPE PROTON ATPASE SUBUNIT B"/>
    <property type="match status" value="1"/>
</dbReference>
<dbReference type="PANTHER" id="PTHR43389:SF4">
    <property type="entry name" value="V-TYPE PROTON ATPASE SUBUNIT B"/>
    <property type="match status" value="1"/>
</dbReference>
<dbReference type="Pfam" id="PF00006">
    <property type="entry name" value="ATP-synt_ab"/>
    <property type="match status" value="1"/>
</dbReference>
<dbReference type="Pfam" id="PF02874">
    <property type="entry name" value="ATP-synt_ab_N"/>
    <property type="match status" value="1"/>
</dbReference>
<dbReference type="Pfam" id="PF22919">
    <property type="entry name" value="ATP-synt_VA_C"/>
    <property type="match status" value="1"/>
</dbReference>
<dbReference type="PIRSF" id="PIRSF039114">
    <property type="entry name" value="V-ATPsynth_beta/V-ATPase_B"/>
    <property type="match status" value="1"/>
</dbReference>
<dbReference type="SUPFAM" id="SSF52540">
    <property type="entry name" value="P-loop containing nucleoside triphosphate hydrolases"/>
    <property type="match status" value="1"/>
</dbReference>
<dbReference type="PROSITE" id="PS00152">
    <property type="entry name" value="ATPASE_ALPHA_BETA"/>
    <property type="match status" value="1"/>
</dbReference>